<reference key="1">
    <citation type="journal article" date="2008" name="J. Bacteriol.">
        <title>The complete genome sequence of Escherichia coli DH10B: insights into the biology of a laboratory workhorse.</title>
        <authorList>
            <person name="Durfee T."/>
            <person name="Nelson R."/>
            <person name="Baldwin S."/>
            <person name="Plunkett G. III"/>
            <person name="Burland V."/>
            <person name="Mau B."/>
            <person name="Petrosino J.F."/>
            <person name="Qin X."/>
            <person name="Muzny D.M."/>
            <person name="Ayele M."/>
            <person name="Gibbs R.A."/>
            <person name="Csorgo B."/>
            <person name="Posfai G."/>
            <person name="Weinstock G.M."/>
            <person name="Blattner F.R."/>
        </authorList>
    </citation>
    <scope>NUCLEOTIDE SEQUENCE [LARGE SCALE GENOMIC DNA]</scope>
    <source>
        <strain>K12 / DH10B</strain>
    </source>
</reference>
<protein>
    <recommendedName>
        <fullName evidence="1">UPF0229 protein YeaH</fullName>
    </recommendedName>
</protein>
<accession>B1XGP4</accession>
<comment type="similarity">
    <text evidence="1">Belongs to the UPF0229 family.</text>
</comment>
<proteinExistence type="inferred from homology"/>
<dbReference type="EMBL" id="CP000948">
    <property type="protein sequence ID" value="ACB02982.1"/>
    <property type="molecule type" value="Genomic_DNA"/>
</dbReference>
<dbReference type="RefSeq" id="WP_000219687.1">
    <property type="nucleotide sequence ID" value="NC_010473.1"/>
</dbReference>
<dbReference type="SMR" id="B1XGP4"/>
<dbReference type="KEGG" id="ecd:ECDH10B_1922"/>
<dbReference type="HOGENOM" id="CLU_049702_0_0_6"/>
<dbReference type="HAMAP" id="MF_01232">
    <property type="entry name" value="UPF0229"/>
    <property type="match status" value="1"/>
</dbReference>
<dbReference type="InterPro" id="IPR006698">
    <property type="entry name" value="UPF0229"/>
</dbReference>
<dbReference type="NCBIfam" id="NF003707">
    <property type="entry name" value="PRK05325.1-2"/>
    <property type="match status" value="1"/>
</dbReference>
<dbReference type="NCBIfam" id="NF003708">
    <property type="entry name" value="PRK05325.1-3"/>
    <property type="match status" value="1"/>
</dbReference>
<dbReference type="PANTHER" id="PTHR30510">
    <property type="entry name" value="UPF0229 PROTEIN YEAH"/>
    <property type="match status" value="1"/>
</dbReference>
<dbReference type="PANTHER" id="PTHR30510:SF2">
    <property type="entry name" value="UPF0229 PROTEIN YEAH"/>
    <property type="match status" value="1"/>
</dbReference>
<dbReference type="Pfam" id="PF04285">
    <property type="entry name" value="DUF444"/>
    <property type="match status" value="1"/>
</dbReference>
<evidence type="ECO:0000255" key="1">
    <source>
        <dbReference type="HAMAP-Rule" id="MF_01232"/>
    </source>
</evidence>
<evidence type="ECO:0000256" key="2">
    <source>
        <dbReference type="SAM" id="MobiDB-lite"/>
    </source>
</evidence>
<name>YEAH_ECODH</name>
<organism>
    <name type="scientific">Escherichia coli (strain K12 / DH10B)</name>
    <dbReference type="NCBI Taxonomy" id="316385"/>
    <lineage>
        <taxon>Bacteria</taxon>
        <taxon>Pseudomonadati</taxon>
        <taxon>Pseudomonadota</taxon>
        <taxon>Gammaproteobacteria</taxon>
        <taxon>Enterobacterales</taxon>
        <taxon>Enterobacteriaceae</taxon>
        <taxon>Escherichia</taxon>
    </lineage>
</organism>
<gene>
    <name evidence="1" type="primary">yeaH</name>
    <name type="ordered locus">ECDH10B_1922</name>
</gene>
<sequence length="427" mass="49392">MTWFIDRRLNGKNKSMVNRQRFLRRYKAQIKQSISEAINKRSVTDVDSGESVSIPTEDISEPMFHQGRGGLRHRVHPGNDHFVQNDRIERPQGGGGGSGSGQGQASQDGEGQDEFVFQISKDEYLDLLFEDLALPNLKQNQQRQLTEYKTHRAGYTANGVPANISVVRSLQNSLARRTAMTAGKRRELHALEENLAIISNSEPAQLLEEERLRKEIAELRAKIERVPFIDTFDLRYKNYEKRPDPSSQAVMFCLMDVSGSMDQSTKDMAKRFYILLYLFLSRTYKNVEVVYIRHHTQAKEVDEHEFFYSQETGGTIVSSALKLMDEVVKERYNPAQWNIYAAQASDGDNWADDSPLCHEILAKKLLPVVRYYSYIEITRRAHQTLWREYEHLQSTFDNFAMQHIRDQDDIYPVFRELFHKQNATAKG</sequence>
<feature type="chain" id="PRO_1000139643" description="UPF0229 protein YeaH">
    <location>
        <begin position="1"/>
        <end position="427"/>
    </location>
</feature>
<feature type="region of interest" description="Disordered" evidence="2">
    <location>
        <begin position="79"/>
        <end position="110"/>
    </location>
</feature>
<feature type="compositionally biased region" description="Basic and acidic residues" evidence="2">
    <location>
        <begin position="79"/>
        <end position="90"/>
    </location>
</feature>
<feature type="compositionally biased region" description="Gly residues" evidence="2">
    <location>
        <begin position="92"/>
        <end position="102"/>
    </location>
</feature>